<reference key="1">
    <citation type="journal article" date="2002" name="Proc. Natl. Acad. Sci. U.S.A.">
        <title>Genome sequence of Streptococcus mutans UA159, a cariogenic dental pathogen.</title>
        <authorList>
            <person name="Ajdic D.J."/>
            <person name="McShan W.M."/>
            <person name="McLaughlin R.E."/>
            <person name="Savic G."/>
            <person name="Chang J."/>
            <person name="Carson M.B."/>
            <person name="Primeaux C."/>
            <person name="Tian R."/>
            <person name="Kenton S."/>
            <person name="Jia H.G."/>
            <person name="Lin S.P."/>
            <person name="Qian Y."/>
            <person name="Li S."/>
            <person name="Zhu H."/>
            <person name="Najar F.Z."/>
            <person name="Lai H."/>
            <person name="White J."/>
            <person name="Roe B.A."/>
            <person name="Ferretti J.J."/>
        </authorList>
    </citation>
    <scope>NUCLEOTIDE SEQUENCE [LARGE SCALE GENOMIC DNA]</scope>
    <source>
        <strain>ATCC 700610 / UA159</strain>
    </source>
</reference>
<reference key="2">
    <citation type="journal article" date="2014" name="Nucleic Acids Res.">
        <title>Phylogeny of Cas9 determines functional exchangeability of dual-RNA and Cas9 among orthologous type II CRISPR-Cas systems.</title>
        <authorList>
            <person name="Fonfara I."/>
            <person name="Le Rhun A."/>
            <person name="Chylinski K."/>
            <person name="Makarova K.S."/>
            <person name="Lecrivain A.L."/>
            <person name="Bzdrenga J."/>
            <person name="Koonin E.V."/>
            <person name="Charpentier E."/>
        </authorList>
    </citation>
    <scope>FUNCTION</scope>
</reference>
<name>RNC_STRMU</name>
<dbReference type="EC" id="3.1.26.3" evidence="2"/>
<dbReference type="EMBL" id="AE014133">
    <property type="protein sequence ID" value="AAN59165.1"/>
    <property type="molecule type" value="Genomic_DNA"/>
</dbReference>
<dbReference type="RefSeq" id="NP_721859.1">
    <property type="nucleotide sequence ID" value="NC_004350.2"/>
</dbReference>
<dbReference type="RefSeq" id="WP_002262927.1">
    <property type="nucleotide sequence ID" value="NC_004350.2"/>
</dbReference>
<dbReference type="SMR" id="Q8DT66"/>
<dbReference type="STRING" id="210007.SMU_1514"/>
<dbReference type="KEGG" id="smu:SMU_1514"/>
<dbReference type="PATRIC" id="fig|210007.7.peg.1347"/>
<dbReference type="eggNOG" id="COG0571">
    <property type="taxonomic scope" value="Bacteria"/>
</dbReference>
<dbReference type="HOGENOM" id="CLU_000907_1_3_9"/>
<dbReference type="OrthoDB" id="9805026at2"/>
<dbReference type="PhylomeDB" id="Q8DT66"/>
<dbReference type="PHI-base" id="PHI:10239"/>
<dbReference type="Proteomes" id="UP000002512">
    <property type="component" value="Chromosome"/>
</dbReference>
<dbReference type="GO" id="GO:0005737">
    <property type="term" value="C:cytoplasm"/>
    <property type="evidence" value="ECO:0007669"/>
    <property type="project" value="UniProtKB-SubCell"/>
</dbReference>
<dbReference type="GO" id="GO:0003725">
    <property type="term" value="F:double-stranded RNA binding"/>
    <property type="evidence" value="ECO:0007669"/>
    <property type="project" value="TreeGrafter"/>
</dbReference>
<dbReference type="GO" id="GO:0046872">
    <property type="term" value="F:metal ion binding"/>
    <property type="evidence" value="ECO:0007669"/>
    <property type="project" value="UniProtKB-KW"/>
</dbReference>
<dbReference type="GO" id="GO:0004525">
    <property type="term" value="F:ribonuclease III activity"/>
    <property type="evidence" value="ECO:0007669"/>
    <property type="project" value="UniProtKB-UniRule"/>
</dbReference>
<dbReference type="GO" id="GO:0019843">
    <property type="term" value="F:rRNA binding"/>
    <property type="evidence" value="ECO:0007669"/>
    <property type="project" value="UniProtKB-KW"/>
</dbReference>
<dbReference type="GO" id="GO:0006397">
    <property type="term" value="P:mRNA processing"/>
    <property type="evidence" value="ECO:0007669"/>
    <property type="project" value="UniProtKB-UniRule"/>
</dbReference>
<dbReference type="GO" id="GO:0010468">
    <property type="term" value="P:regulation of gene expression"/>
    <property type="evidence" value="ECO:0007669"/>
    <property type="project" value="TreeGrafter"/>
</dbReference>
<dbReference type="GO" id="GO:0006364">
    <property type="term" value="P:rRNA processing"/>
    <property type="evidence" value="ECO:0007669"/>
    <property type="project" value="UniProtKB-UniRule"/>
</dbReference>
<dbReference type="GO" id="GO:0008033">
    <property type="term" value="P:tRNA processing"/>
    <property type="evidence" value="ECO:0007669"/>
    <property type="project" value="UniProtKB-KW"/>
</dbReference>
<dbReference type="CDD" id="cd10845">
    <property type="entry name" value="DSRM_RNAse_III_family"/>
    <property type="match status" value="1"/>
</dbReference>
<dbReference type="CDD" id="cd00593">
    <property type="entry name" value="RIBOc"/>
    <property type="match status" value="1"/>
</dbReference>
<dbReference type="FunFam" id="1.10.1520.10:FF:000001">
    <property type="entry name" value="Ribonuclease 3"/>
    <property type="match status" value="1"/>
</dbReference>
<dbReference type="FunFam" id="3.30.160.20:FF:000003">
    <property type="entry name" value="Ribonuclease 3"/>
    <property type="match status" value="1"/>
</dbReference>
<dbReference type="Gene3D" id="3.30.160.20">
    <property type="match status" value="1"/>
</dbReference>
<dbReference type="Gene3D" id="1.10.1520.10">
    <property type="entry name" value="Ribonuclease III domain"/>
    <property type="match status" value="1"/>
</dbReference>
<dbReference type="HAMAP" id="MF_00104">
    <property type="entry name" value="RNase_III"/>
    <property type="match status" value="1"/>
</dbReference>
<dbReference type="InterPro" id="IPR014720">
    <property type="entry name" value="dsRBD_dom"/>
</dbReference>
<dbReference type="InterPro" id="IPR011907">
    <property type="entry name" value="RNase_III"/>
</dbReference>
<dbReference type="InterPro" id="IPR000999">
    <property type="entry name" value="RNase_III_dom"/>
</dbReference>
<dbReference type="InterPro" id="IPR036389">
    <property type="entry name" value="RNase_III_sf"/>
</dbReference>
<dbReference type="NCBIfam" id="TIGR02191">
    <property type="entry name" value="RNaseIII"/>
    <property type="match status" value="1"/>
</dbReference>
<dbReference type="PANTHER" id="PTHR11207:SF0">
    <property type="entry name" value="RIBONUCLEASE 3"/>
    <property type="match status" value="1"/>
</dbReference>
<dbReference type="PANTHER" id="PTHR11207">
    <property type="entry name" value="RIBONUCLEASE III"/>
    <property type="match status" value="1"/>
</dbReference>
<dbReference type="Pfam" id="PF00035">
    <property type="entry name" value="dsrm"/>
    <property type="match status" value="1"/>
</dbReference>
<dbReference type="Pfam" id="PF14622">
    <property type="entry name" value="Ribonucleas_3_3"/>
    <property type="match status" value="1"/>
</dbReference>
<dbReference type="SMART" id="SM00358">
    <property type="entry name" value="DSRM"/>
    <property type="match status" value="1"/>
</dbReference>
<dbReference type="SMART" id="SM00535">
    <property type="entry name" value="RIBOc"/>
    <property type="match status" value="1"/>
</dbReference>
<dbReference type="SUPFAM" id="SSF54768">
    <property type="entry name" value="dsRNA-binding domain-like"/>
    <property type="match status" value="1"/>
</dbReference>
<dbReference type="SUPFAM" id="SSF69065">
    <property type="entry name" value="RNase III domain-like"/>
    <property type="match status" value="1"/>
</dbReference>
<dbReference type="PROSITE" id="PS50137">
    <property type="entry name" value="DS_RBD"/>
    <property type="match status" value="1"/>
</dbReference>
<dbReference type="PROSITE" id="PS00517">
    <property type="entry name" value="RNASE_3_1"/>
    <property type="match status" value="1"/>
</dbReference>
<dbReference type="PROSITE" id="PS50142">
    <property type="entry name" value="RNASE_3_2"/>
    <property type="match status" value="1"/>
</dbReference>
<feature type="chain" id="PRO_0000228590" description="Ribonuclease 3">
    <location>
        <begin position="1"/>
        <end position="231"/>
    </location>
</feature>
<feature type="domain" description="RNase III" evidence="2">
    <location>
        <begin position="1"/>
        <end position="134"/>
    </location>
</feature>
<feature type="domain" description="DRBM" evidence="2">
    <location>
        <begin position="160"/>
        <end position="229"/>
    </location>
</feature>
<feature type="active site" evidence="2">
    <location>
        <position position="51"/>
    </location>
</feature>
<feature type="active site" evidence="2">
    <location>
        <position position="123"/>
    </location>
</feature>
<feature type="binding site" evidence="2">
    <location>
        <position position="47"/>
    </location>
    <ligand>
        <name>Mg(2+)</name>
        <dbReference type="ChEBI" id="CHEBI:18420"/>
    </ligand>
</feature>
<feature type="binding site" evidence="2">
    <location>
        <position position="120"/>
    </location>
    <ligand>
        <name>Mg(2+)</name>
        <dbReference type="ChEBI" id="CHEBI:18420"/>
    </ligand>
</feature>
<feature type="binding site" evidence="2">
    <location>
        <position position="123"/>
    </location>
    <ligand>
        <name>Mg(2+)</name>
        <dbReference type="ChEBI" id="CHEBI:18420"/>
    </ligand>
</feature>
<protein>
    <recommendedName>
        <fullName evidence="2">Ribonuclease 3</fullName>
        <ecNumber evidence="2">3.1.26.3</ecNumber>
    </recommendedName>
    <alternativeName>
        <fullName evidence="2">Ribonuclease III</fullName>
        <shortName evidence="2">RNase III</shortName>
    </alternativeName>
</protein>
<comment type="function">
    <text evidence="1">Digests double-stranded RNA. Involved in the processing of primary rRNA transcript to yield the immediate precursors to the large and small rRNAs (23S and 16S). Also processes some mRNAs, and tRNAs when they are encoded in the rRNA operon (By similarity).</text>
</comment>
<comment type="function">
    <text evidence="3 4">CRISPR (clustered regularly interspaced short palindromic repeat) is an adaptive immune system that provides protection against mobile genetic elements (viruses, transposable elements and conjugative plasmids). CRISPR clusters contain spacers, sequences complementary to antecedent mobile elements, and target invading nucleic acids. CRISPR clusters are transcribed and processed into CRISPR RNA (crRNA). In this organism endogenous ribonuclease 3 and Cas9 are required for correct coprocessing of pre-crRNA and the trans-encoded small RNA (tracrRNA). Cas9, crRNA and tracrRNA are required for cleavage of invading DNA (Probable). Complements pre-crRNA and tracrRNA coprocessing defects in an rnc deletion in S.pyogenes strain 370 (PubMed:24270795).</text>
</comment>
<comment type="catalytic activity">
    <reaction evidence="2">
        <text>Endonucleolytic cleavage to 5'-phosphomonoester.</text>
        <dbReference type="EC" id="3.1.26.3"/>
    </reaction>
</comment>
<comment type="cofactor">
    <cofactor evidence="2">
        <name>Mg(2+)</name>
        <dbReference type="ChEBI" id="CHEBI:18420"/>
    </cofactor>
</comment>
<comment type="subunit">
    <text evidence="2">Homodimer.</text>
</comment>
<comment type="subcellular location">
    <subcellularLocation>
        <location evidence="2">Cytoplasm</location>
    </subcellularLocation>
</comment>
<comment type="similarity">
    <text evidence="2">Belongs to the ribonuclease III family.</text>
</comment>
<sequence length="231" mass="26029">MKTLEKKLAEDFKIVFSDKELLETAFTHTSYANEHRLLNISHNERLEFLGDAVLQLTISHYLFDKYPQKAEGDLSKMRSMIVREESLAGFSRNCHFDRYIKLGKGEEKSGGRQRDTILGDLFEAFLGALLLDAGLKAVEAFLNQVVIPKVENNNYERVTDYKTALQELLQVDGDVLIDYEVLKESGPAHAKCFEVAVSMNHEKLSSGTGKSKKLAEQEAAKNALEKLQRGS</sequence>
<proteinExistence type="inferred from homology"/>
<gene>
    <name evidence="2" type="primary">rnc</name>
    <name type="ordered locus">SMU_1514</name>
</gene>
<accession>Q8DT66</accession>
<keyword id="KW-0963">Cytoplasm</keyword>
<keyword id="KW-0255">Endonuclease</keyword>
<keyword id="KW-0378">Hydrolase</keyword>
<keyword id="KW-0460">Magnesium</keyword>
<keyword id="KW-0479">Metal-binding</keyword>
<keyword id="KW-0507">mRNA processing</keyword>
<keyword id="KW-0540">Nuclease</keyword>
<keyword id="KW-1185">Reference proteome</keyword>
<keyword id="KW-0694">RNA-binding</keyword>
<keyword id="KW-0698">rRNA processing</keyword>
<keyword id="KW-0699">rRNA-binding</keyword>
<keyword id="KW-0819">tRNA processing</keyword>
<evidence type="ECO:0000250" key="1"/>
<evidence type="ECO:0000255" key="2">
    <source>
        <dbReference type="HAMAP-Rule" id="MF_00104"/>
    </source>
</evidence>
<evidence type="ECO:0000269" key="3">
    <source>
    </source>
</evidence>
<evidence type="ECO:0000305" key="4"/>
<organism>
    <name type="scientific">Streptococcus mutans serotype c (strain ATCC 700610 / UA159)</name>
    <dbReference type="NCBI Taxonomy" id="210007"/>
    <lineage>
        <taxon>Bacteria</taxon>
        <taxon>Bacillati</taxon>
        <taxon>Bacillota</taxon>
        <taxon>Bacilli</taxon>
        <taxon>Lactobacillales</taxon>
        <taxon>Streptococcaceae</taxon>
        <taxon>Streptococcus</taxon>
    </lineage>
</organism>